<comment type="function">
    <text evidence="4 5">Serine/threonine protein phosphatase forming with CNEP1R1 an active phosphatase complex that dephosphorylates and may activate LPIN1 and LPIN2. LPIN1 and LPIN2 are phosphatidate phosphatases that catalyze the conversion of phosphatidic acid to diacylglycerol and control the metabolism of fatty acids at different levels. May indirectly modulate the lipid composition of nuclear and/or endoplasmic reticulum membranes and be required for proper nuclear membrane morphology and/or dynamics. May also indirectly regulate the production of lipid droplets and triacylglycerol. May antagonize BMP signaling.</text>
</comment>
<comment type="catalytic activity">
    <reaction>
        <text>O-phospho-L-seryl-[protein] + H2O = L-seryl-[protein] + phosphate</text>
        <dbReference type="Rhea" id="RHEA:20629"/>
        <dbReference type="Rhea" id="RHEA-COMP:9863"/>
        <dbReference type="Rhea" id="RHEA-COMP:11604"/>
        <dbReference type="ChEBI" id="CHEBI:15377"/>
        <dbReference type="ChEBI" id="CHEBI:29999"/>
        <dbReference type="ChEBI" id="CHEBI:43474"/>
        <dbReference type="ChEBI" id="CHEBI:83421"/>
        <dbReference type="EC" id="3.1.3.16"/>
    </reaction>
</comment>
<comment type="catalytic activity">
    <reaction>
        <text>O-phospho-L-threonyl-[protein] + H2O = L-threonyl-[protein] + phosphate</text>
        <dbReference type="Rhea" id="RHEA:47004"/>
        <dbReference type="Rhea" id="RHEA-COMP:11060"/>
        <dbReference type="Rhea" id="RHEA-COMP:11605"/>
        <dbReference type="ChEBI" id="CHEBI:15377"/>
        <dbReference type="ChEBI" id="CHEBI:30013"/>
        <dbReference type="ChEBI" id="CHEBI:43474"/>
        <dbReference type="ChEBI" id="CHEBI:61977"/>
        <dbReference type="EC" id="3.1.3.16"/>
    </reaction>
</comment>
<comment type="biophysicochemical properties">
    <kinetics>
        <KM evidence="4">18 mM for p-nitrophenylphosphate</KM>
    </kinetics>
    <phDependence>
        <text evidence="4">Optimum pH is 5.5.</text>
    </phDependence>
</comment>
<comment type="subunit">
    <text evidence="6">(Microbial infection) Interacts with Chandipura virus matrix protein.</text>
</comment>
<comment type="subunit">
    <text evidence="5">Interacts with CNEP1R1; the complex dephosphorylates LPIN1 and LPIN2.</text>
</comment>
<comment type="interaction">
    <interactant intactId="EBI-5323433">
        <id>O95476</id>
    </interactant>
    <interactant intactId="EBI-5323455">
        <id>Q8N9A8</id>
        <label>CNEP1R1</label>
    </interactant>
    <organismsDiffer>false</organismsDiffer>
    <experiments>4</experiments>
</comment>
<comment type="interaction">
    <interactant intactId="EBI-5323433">
        <id>O95476</id>
    </interactant>
    <interactant intactId="EBI-947187">
        <id>Q9UHD9</id>
        <label>UBQLN2</label>
    </interactant>
    <organismsDiffer>false</organismsDiffer>
    <experiments>3</experiments>
</comment>
<comment type="interaction">
    <interactant intactId="EBI-5323433">
        <id>O95476</id>
    </interactant>
    <interactant intactId="EBI-10823897">
        <id>Q9WH76</id>
        <label>M</label>
    </interactant>
    <organismsDiffer>true</organismsDiffer>
    <experiments>3</experiments>
</comment>
<comment type="subcellular location">
    <subcellularLocation>
        <location>Endoplasmic reticulum membrane</location>
        <topology>Single-pass membrane protein</topology>
    </subcellularLocation>
    <subcellularLocation>
        <location>Nucleus membrane</location>
        <topology>Single-pass membrane protein</topology>
    </subcellularLocation>
</comment>
<comment type="tissue specificity">
    <text evidence="5">Muscle specific with lower expression in other metabolic tissues.</text>
</comment>
<comment type="similarity">
    <text evidence="8">Belongs to the dullard family.</text>
</comment>
<organism>
    <name type="scientific">Homo sapiens</name>
    <name type="common">Human</name>
    <dbReference type="NCBI Taxonomy" id="9606"/>
    <lineage>
        <taxon>Eukaryota</taxon>
        <taxon>Metazoa</taxon>
        <taxon>Chordata</taxon>
        <taxon>Craniata</taxon>
        <taxon>Vertebrata</taxon>
        <taxon>Euteleostomi</taxon>
        <taxon>Mammalia</taxon>
        <taxon>Eutheria</taxon>
        <taxon>Euarchontoglires</taxon>
        <taxon>Primates</taxon>
        <taxon>Haplorrhini</taxon>
        <taxon>Catarrhini</taxon>
        <taxon>Hominidae</taxon>
        <taxon>Homo</taxon>
    </lineage>
</organism>
<protein>
    <recommendedName>
        <fullName>CTD nuclear envelope phosphatase 1</fullName>
        <ecNumber>3.1.3.16</ecNumber>
    </recommendedName>
    <alternativeName>
        <fullName>Serine/threonine-protein phosphatase dullard</fullName>
    </alternativeName>
</protein>
<evidence type="ECO:0000255" key="1"/>
<evidence type="ECO:0000255" key="2">
    <source>
        <dbReference type="PROSITE-ProRule" id="PRU00336"/>
    </source>
</evidence>
<evidence type="ECO:0000269" key="3">
    <source>
    </source>
</evidence>
<evidence type="ECO:0000269" key="4">
    <source>
    </source>
</evidence>
<evidence type="ECO:0000269" key="5">
    <source>
    </source>
</evidence>
<evidence type="ECO:0000269" key="6">
    <source>
    </source>
</evidence>
<evidence type="ECO:0000269" key="7">
    <source ref="1"/>
</evidence>
<evidence type="ECO:0000305" key="8"/>
<evidence type="ECO:0007829" key="9">
    <source>
        <dbReference type="PDB" id="8UJL"/>
    </source>
</evidence>
<evidence type="ECO:0007829" key="10">
    <source>
        <dbReference type="PDB" id="8UJM"/>
    </source>
</evidence>
<keyword id="KW-0002">3D-structure</keyword>
<keyword id="KW-0256">Endoplasmic reticulum</keyword>
<keyword id="KW-0945">Host-virus interaction</keyword>
<keyword id="KW-0378">Hydrolase</keyword>
<keyword id="KW-0472">Membrane</keyword>
<keyword id="KW-0539">Nucleus</keyword>
<keyword id="KW-0904">Protein phosphatase</keyword>
<keyword id="KW-1267">Proteomics identification</keyword>
<keyword id="KW-1185">Reference proteome</keyword>
<keyword id="KW-0812">Transmembrane</keyword>
<keyword id="KW-1133">Transmembrane helix</keyword>
<reference key="1">
    <citation type="submission" date="1998-10" db="EMBL/GenBank/DDBJ databases">
        <authorList>
            <person name="Keen J."/>
            <person name="Inglehearn C."/>
        </authorList>
    </citation>
    <scope>NUCLEOTIDE SEQUENCE [MRNA]</scope>
    <scope>VARIANT ALA-12</scope>
    <source>
        <tissue>Brain</tissue>
    </source>
</reference>
<reference key="2">
    <citation type="journal article" date="2006" name="BMC Genomics">
        <title>NovelFam3000 -- uncharacterized human protein domains conserved across model organisms.</title>
        <authorList>
            <person name="Kemmer D."/>
            <person name="Podowski R.M."/>
            <person name="Arenillas D."/>
            <person name="Lim J."/>
            <person name="Hodges E."/>
            <person name="Roth P."/>
            <person name="Sonnhammer E.L.L."/>
            <person name="Hoeoeg C."/>
            <person name="Wasserman W.W."/>
        </authorList>
    </citation>
    <scope>NUCLEOTIDE SEQUENCE [MRNA]</scope>
    <scope>SUBCELLULAR LOCATION</scope>
    <scope>VARIANT ALA-12</scope>
</reference>
<reference key="3">
    <citation type="journal article" date="2006" name="Nature">
        <title>DNA sequence of human chromosome 17 and analysis of rearrangement in the human lineage.</title>
        <authorList>
            <person name="Zody M.C."/>
            <person name="Garber M."/>
            <person name="Adams D.J."/>
            <person name="Sharpe T."/>
            <person name="Harrow J."/>
            <person name="Lupski J.R."/>
            <person name="Nicholson C."/>
            <person name="Searle S.M."/>
            <person name="Wilming L."/>
            <person name="Young S.K."/>
            <person name="Abouelleil A."/>
            <person name="Allen N.R."/>
            <person name="Bi W."/>
            <person name="Bloom T."/>
            <person name="Borowsky M.L."/>
            <person name="Bugalter B.E."/>
            <person name="Butler J."/>
            <person name="Chang J.L."/>
            <person name="Chen C.-K."/>
            <person name="Cook A."/>
            <person name="Corum B."/>
            <person name="Cuomo C.A."/>
            <person name="de Jong P.J."/>
            <person name="DeCaprio D."/>
            <person name="Dewar K."/>
            <person name="FitzGerald M."/>
            <person name="Gilbert J."/>
            <person name="Gibson R."/>
            <person name="Gnerre S."/>
            <person name="Goldstein S."/>
            <person name="Grafham D.V."/>
            <person name="Grocock R."/>
            <person name="Hafez N."/>
            <person name="Hagopian D.S."/>
            <person name="Hart E."/>
            <person name="Norman C.H."/>
            <person name="Humphray S."/>
            <person name="Jaffe D.B."/>
            <person name="Jones M."/>
            <person name="Kamal M."/>
            <person name="Khodiyar V.K."/>
            <person name="LaButti K."/>
            <person name="Laird G."/>
            <person name="Lehoczky J."/>
            <person name="Liu X."/>
            <person name="Lokyitsang T."/>
            <person name="Loveland J."/>
            <person name="Lui A."/>
            <person name="Macdonald P."/>
            <person name="Major J.E."/>
            <person name="Matthews L."/>
            <person name="Mauceli E."/>
            <person name="McCarroll S.A."/>
            <person name="Mihalev A.H."/>
            <person name="Mudge J."/>
            <person name="Nguyen C."/>
            <person name="Nicol R."/>
            <person name="O'Leary S.B."/>
            <person name="Osoegawa K."/>
            <person name="Schwartz D.C."/>
            <person name="Shaw-Smith C."/>
            <person name="Stankiewicz P."/>
            <person name="Steward C."/>
            <person name="Swarbreck D."/>
            <person name="Venkataraman V."/>
            <person name="Whittaker C.A."/>
            <person name="Yang X."/>
            <person name="Zimmer A.R."/>
            <person name="Bradley A."/>
            <person name="Hubbard T."/>
            <person name="Birren B.W."/>
            <person name="Rogers J."/>
            <person name="Lander E.S."/>
            <person name="Nusbaum C."/>
        </authorList>
    </citation>
    <scope>NUCLEOTIDE SEQUENCE [LARGE SCALE GENOMIC DNA]</scope>
</reference>
<reference key="4">
    <citation type="submission" date="2005-09" db="EMBL/GenBank/DDBJ databases">
        <authorList>
            <person name="Mural R.J."/>
            <person name="Istrail S."/>
            <person name="Sutton G.G."/>
            <person name="Florea L."/>
            <person name="Halpern A.L."/>
            <person name="Mobarry C.M."/>
            <person name="Lippert R."/>
            <person name="Walenz B."/>
            <person name="Shatkay H."/>
            <person name="Dew I."/>
            <person name="Miller J.R."/>
            <person name="Flanigan M.J."/>
            <person name="Edwards N.J."/>
            <person name="Bolanos R."/>
            <person name="Fasulo D."/>
            <person name="Halldorsson B.V."/>
            <person name="Hannenhalli S."/>
            <person name="Turner R."/>
            <person name="Yooseph S."/>
            <person name="Lu F."/>
            <person name="Nusskern D.R."/>
            <person name="Shue B.C."/>
            <person name="Zheng X.H."/>
            <person name="Zhong F."/>
            <person name="Delcher A.L."/>
            <person name="Huson D.H."/>
            <person name="Kravitz S.A."/>
            <person name="Mouchard L."/>
            <person name="Reinert K."/>
            <person name="Remington K.A."/>
            <person name="Clark A.G."/>
            <person name="Waterman M.S."/>
            <person name="Eichler E.E."/>
            <person name="Adams M.D."/>
            <person name="Hunkapiller M.W."/>
            <person name="Myers E.W."/>
            <person name="Venter J.C."/>
        </authorList>
    </citation>
    <scope>NUCLEOTIDE SEQUENCE [LARGE SCALE GENOMIC DNA]</scope>
</reference>
<reference key="5">
    <citation type="journal article" date="2004" name="Genome Res.">
        <title>The status, quality, and expansion of the NIH full-length cDNA project: the Mammalian Gene Collection (MGC).</title>
        <authorList>
            <consortium name="The MGC Project Team"/>
        </authorList>
    </citation>
    <scope>NUCLEOTIDE SEQUENCE [LARGE SCALE MRNA]</scope>
    <source>
        <tissue>Muscle</tissue>
    </source>
</reference>
<reference key="6">
    <citation type="journal article" date="2002" name="Biochem. Biophys. Res. Commun.">
        <title>Molecular cloning and characterization of dullard: a novel gene required for neural development.</title>
        <authorList>
            <person name="Satow R."/>
            <person name="Chan T.C."/>
            <person name="Asashima M."/>
        </authorList>
    </citation>
    <scope>IDENTIFICATION</scope>
</reference>
<reference key="7">
    <citation type="journal article" date="2007" name="Proc. Natl. Acad. Sci. U.S.A.">
        <title>A conserved phosphatase cascade that regulates nuclear membrane biogenesis.</title>
        <authorList>
            <person name="Kim Y."/>
            <person name="Gentry M.S."/>
            <person name="Harris T.E."/>
            <person name="Wiley S.E."/>
            <person name="Lawrence J.C. Jr."/>
            <person name="Dixon J.E."/>
        </authorList>
    </citation>
    <scope>FUNCTION</scope>
    <scope>BIOPHYSICOCHEMICAL PROPERTIES</scope>
    <scope>MUTAGENESIS OF ASP-67</scope>
    <scope>SUBCELLULAR LOCATION</scope>
</reference>
<reference key="8">
    <citation type="journal article" date="2008" name="Proc. Natl. Acad. Sci. U.S.A.">
        <title>A quantitative atlas of mitotic phosphorylation.</title>
        <authorList>
            <person name="Dephoure N."/>
            <person name="Zhou C."/>
            <person name="Villen J."/>
            <person name="Beausoleil S.A."/>
            <person name="Bakalarski C.E."/>
            <person name="Elledge S.J."/>
            <person name="Gygi S.P."/>
        </authorList>
    </citation>
    <scope>IDENTIFICATION BY MASS SPECTROMETRY [LARGE SCALE ANALYSIS]</scope>
    <source>
        <tissue>Cervix carcinoma</tissue>
    </source>
</reference>
<reference key="9">
    <citation type="journal article" date="2012" name="J. Biol. Chem.">
        <title>Nuclear envelope phosphatase-regulatory subunit 1 (formerly TMEM188) is the metazoan SPO7 ortholog and functions in the lipin activation pathway.</title>
        <authorList>
            <person name="Han S."/>
            <person name="Bahmanyar S."/>
            <person name="Zhang P."/>
            <person name="Grishin N."/>
            <person name="Oegema K."/>
            <person name="Crooke R."/>
            <person name="Graham M."/>
            <person name="Reue K."/>
            <person name="Dixon J.E."/>
            <person name="Goodman J.M."/>
        </authorList>
    </citation>
    <scope>FUNCTION IN LPIN1 AND LPIN2 DEPHOSPHORYLATION</scope>
    <scope>INTERACTION WITH CNEP1R1</scope>
    <scope>SUBCELLULAR LOCATION</scope>
    <scope>TISSUE SPECIFICITY</scope>
</reference>
<reference key="10">
    <citation type="journal article" date="2015" name="Acta Trop.">
        <title>Host interactions of Chandipura virus matrix protein.</title>
        <authorList>
            <person name="Rajasekharan S."/>
            <person name="Kumar K."/>
            <person name="Rana J."/>
            <person name="Gupta A."/>
            <person name="Chaudhary V.K."/>
            <person name="Gupta S."/>
        </authorList>
    </citation>
    <scope>INTERACTION WITH CHANDIPURA VIRUS MATRIX PROTEIN (MICROBIAL INFECTION)</scope>
</reference>
<sequence length="244" mass="28377">MMRTQCLLGLRTFVAFAAKLWSFFIYLLRRQIRTVIQYQTVRYDILPLSPVSRNRLAQVKRKILVLDLDETLIHSHHDGVLRPTVRPGTPPDFILKVVIDKHPVRFFVHKRPHVDFFLEVVSQWYELVVFTASMEIYGSAVADKLDNSRSILKRRYYRQHCTLELGSYIKDLSVVHSDLSSIVILDNSPGAYRSHPDNAIPIKSWFSDPSDTALLNLLPMLDALRFTADVRSVLSRNLHQHRLW</sequence>
<gene>
    <name type="primary">CTDNEP1</name>
    <name type="synonym">DULLARD</name>
</gene>
<feature type="chain" id="PRO_0000297967" description="CTD nuclear envelope phosphatase 1">
    <location>
        <begin position="1"/>
        <end position="244"/>
    </location>
</feature>
<feature type="transmembrane region" description="Helical" evidence="1">
    <location>
        <begin position="7"/>
        <end position="29"/>
    </location>
</feature>
<feature type="domain" description="FCP1 homology" evidence="2">
    <location>
        <begin position="57"/>
        <end position="224"/>
    </location>
</feature>
<feature type="sequence variant" id="VAR_034699" description="In dbSNP:rs3744399." evidence="3 7">
    <original>T</original>
    <variation>A</variation>
    <location>
        <position position="12"/>
    </location>
</feature>
<feature type="mutagenesis site" description="Abolishes phosphatase activity." evidence="4">
    <original>D</original>
    <variation>N</variation>
    <variation>E</variation>
    <location>
        <position position="67"/>
    </location>
</feature>
<feature type="helix" evidence="9">
    <location>
        <begin position="50"/>
        <end position="58"/>
    </location>
</feature>
<feature type="strand" evidence="9">
    <location>
        <begin position="63"/>
        <end position="66"/>
    </location>
</feature>
<feature type="turn" evidence="9">
    <location>
        <begin position="69"/>
        <end position="71"/>
    </location>
</feature>
<feature type="strand" evidence="9">
    <location>
        <begin position="72"/>
        <end position="77"/>
    </location>
</feature>
<feature type="strand" evidence="9">
    <location>
        <begin position="92"/>
        <end position="101"/>
    </location>
</feature>
<feature type="strand" evidence="9">
    <location>
        <begin position="103"/>
        <end position="110"/>
    </location>
</feature>
<feature type="helix" evidence="9">
    <location>
        <begin position="114"/>
        <end position="121"/>
    </location>
</feature>
<feature type="turn" evidence="9">
    <location>
        <begin position="122"/>
        <end position="124"/>
    </location>
</feature>
<feature type="strand" evidence="9">
    <location>
        <begin position="125"/>
        <end position="130"/>
    </location>
</feature>
<feature type="helix" evidence="9">
    <location>
        <begin position="135"/>
        <end position="146"/>
    </location>
</feature>
<feature type="strand" evidence="9">
    <location>
        <begin position="150"/>
        <end position="152"/>
    </location>
</feature>
<feature type="strand" evidence="10">
    <location>
        <begin position="154"/>
        <end position="156"/>
    </location>
</feature>
<feature type="helix" evidence="9">
    <location>
        <begin position="158"/>
        <end position="160"/>
    </location>
</feature>
<feature type="strand" evidence="9">
    <location>
        <begin position="161"/>
        <end position="164"/>
    </location>
</feature>
<feature type="strand" evidence="9">
    <location>
        <begin position="167"/>
        <end position="170"/>
    </location>
</feature>
<feature type="helix" evidence="9">
    <location>
        <begin position="172"/>
        <end position="174"/>
    </location>
</feature>
<feature type="helix" evidence="9">
    <location>
        <begin position="179"/>
        <end position="181"/>
    </location>
</feature>
<feature type="strand" evidence="9">
    <location>
        <begin position="182"/>
        <end position="187"/>
    </location>
</feature>
<feature type="helix" evidence="9">
    <location>
        <begin position="189"/>
        <end position="192"/>
    </location>
</feature>
<feature type="helix" evidence="9">
    <location>
        <begin position="196"/>
        <end position="198"/>
    </location>
</feature>
<feature type="strand" evidence="9">
    <location>
        <begin position="199"/>
        <end position="201"/>
    </location>
</feature>
<feature type="helix" evidence="9">
    <location>
        <begin position="213"/>
        <end position="216"/>
    </location>
</feature>
<feature type="helix" evidence="9">
    <location>
        <begin position="218"/>
        <end position="224"/>
    </location>
</feature>
<feature type="strand" evidence="10">
    <location>
        <begin position="227"/>
        <end position="229"/>
    </location>
</feature>
<feature type="helix" evidence="9">
    <location>
        <begin position="231"/>
        <end position="234"/>
    </location>
</feature>
<name>CNEP1_HUMAN</name>
<dbReference type="EC" id="3.1.3.16"/>
<dbReference type="EMBL" id="AJ011916">
    <property type="protein sequence ID" value="CAA09865.1"/>
    <property type="molecule type" value="mRNA"/>
</dbReference>
<dbReference type="EMBL" id="AY364239">
    <property type="protein sequence ID" value="AAQ76798.1"/>
    <property type="molecule type" value="mRNA"/>
</dbReference>
<dbReference type="EMBL" id="AC003688">
    <property type="status" value="NOT_ANNOTATED_CDS"/>
    <property type="molecule type" value="Genomic_DNA"/>
</dbReference>
<dbReference type="EMBL" id="AC120057">
    <property type="status" value="NOT_ANNOTATED_CDS"/>
    <property type="molecule type" value="Genomic_DNA"/>
</dbReference>
<dbReference type="EMBL" id="CH471108">
    <property type="protein sequence ID" value="EAW90233.1"/>
    <property type="molecule type" value="Genomic_DNA"/>
</dbReference>
<dbReference type="EMBL" id="CH471108">
    <property type="protein sequence ID" value="EAW90235.1"/>
    <property type="molecule type" value="Genomic_DNA"/>
</dbReference>
<dbReference type="EMBL" id="CH471108">
    <property type="protein sequence ID" value="EAW90236.1"/>
    <property type="molecule type" value="Genomic_DNA"/>
</dbReference>
<dbReference type="EMBL" id="BC009295">
    <property type="protein sequence ID" value="AAH09295.1"/>
    <property type="molecule type" value="mRNA"/>
</dbReference>
<dbReference type="CCDS" id="CCDS11093.1"/>
<dbReference type="RefSeq" id="NP_001137247.1">
    <property type="nucleotide sequence ID" value="NM_001143775.2"/>
</dbReference>
<dbReference type="RefSeq" id="NP_056158.2">
    <property type="nucleotide sequence ID" value="NM_015343.4"/>
</dbReference>
<dbReference type="PDB" id="8UJL">
    <property type="method" value="X-ray"/>
    <property type="resolution" value="1.91 A"/>
    <property type="chains" value="A=39-244"/>
</dbReference>
<dbReference type="PDB" id="8UJM">
    <property type="method" value="X-ray"/>
    <property type="resolution" value="2.16 A"/>
    <property type="chains" value="A/B=39-244"/>
</dbReference>
<dbReference type="PDBsum" id="8UJL"/>
<dbReference type="PDBsum" id="8UJM"/>
<dbReference type="SMR" id="O95476"/>
<dbReference type="BioGRID" id="116972">
    <property type="interactions" value="76"/>
</dbReference>
<dbReference type="FunCoup" id="O95476">
    <property type="interactions" value="2976"/>
</dbReference>
<dbReference type="IntAct" id="O95476">
    <property type="interactions" value="61"/>
</dbReference>
<dbReference type="MINT" id="O95476"/>
<dbReference type="STRING" id="9606.ENSP00000460683"/>
<dbReference type="DEPOD" id="CTDNEP1"/>
<dbReference type="iPTMnet" id="O95476"/>
<dbReference type="PhosphoSitePlus" id="O95476"/>
<dbReference type="SwissPalm" id="O95476"/>
<dbReference type="BioMuta" id="CTDNEP1"/>
<dbReference type="jPOST" id="O95476"/>
<dbReference type="MassIVE" id="O95476"/>
<dbReference type="PaxDb" id="9606-ENSP00000461749"/>
<dbReference type="PeptideAtlas" id="O95476"/>
<dbReference type="ProteomicsDB" id="50907"/>
<dbReference type="Pumba" id="O95476"/>
<dbReference type="TopDownProteomics" id="O95476"/>
<dbReference type="Antibodypedia" id="23976">
    <property type="antibodies" value="143 antibodies from 22 providers"/>
</dbReference>
<dbReference type="DNASU" id="23399"/>
<dbReference type="Ensembl" id="ENST00000318988.10">
    <property type="protein sequence ID" value="ENSP00000321732.6"/>
    <property type="gene ID" value="ENSG00000175826.12"/>
</dbReference>
<dbReference type="Ensembl" id="ENST00000573600.5">
    <property type="protein sequence ID" value="ENSP00000461749.1"/>
    <property type="gene ID" value="ENSG00000175826.12"/>
</dbReference>
<dbReference type="Ensembl" id="ENST00000574205.5">
    <property type="protein sequence ID" value="ENSP00000458758.1"/>
    <property type="gene ID" value="ENSG00000175826.12"/>
</dbReference>
<dbReference type="Ensembl" id="ENST00000574322.6">
    <property type="protein sequence ID" value="ENSP00000460683.1"/>
    <property type="gene ID" value="ENSG00000175826.12"/>
</dbReference>
<dbReference type="GeneID" id="23399"/>
<dbReference type="KEGG" id="hsa:23399"/>
<dbReference type="MANE-Select" id="ENST00000574322.6">
    <property type="protein sequence ID" value="ENSP00000460683.1"/>
    <property type="RefSeq nucleotide sequence ID" value="NM_001143775.2"/>
    <property type="RefSeq protein sequence ID" value="NP_001137247.1"/>
</dbReference>
<dbReference type="UCSC" id="uc002gfd.3">
    <property type="organism name" value="human"/>
</dbReference>
<dbReference type="AGR" id="HGNC:19085"/>
<dbReference type="CTD" id="23399"/>
<dbReference type="DisGeNET" id="23399"/>
<dbReference type="GeneCards" id="CTDNEP1"/>
<dbReference type="HGNC" id="HGNC:19085">
    <property type="gene designation" value="CTDNEP1"/>
</dbReference>
<dbReference type="HPA" id="ENSG00000175826">
    <property type="expression patterns" value="Tissue enhanced (skeletal)"/>
</dbReference>
<dbReference type="MIM" id="610684">
    <property type="type" value="gene"/>
</dbReference>
<dbReference type="neXtProt" id="NX_O95476"/>
<dbReference type="OpenTargets" id="ENSG00000175826"/>
<dbReference type="PharmGKB" id="PA134937999"/>
<dbReference type="VEuPathDB" id="HostDB:ENSG00000175826"/>
<dbReference type="eggNOG" id="KOG1605">
    <property type="taxonomic scope" value="Eukaryota"/>
</dbReference>
<dbReference type="GeneTree" id="ENSGT01040000240503"/>
<dbReference type="InParanoid" id="O95476"/>
<dbReference type="OMA" id="RIWGFFM"/>
<dbReference type="OrthoDB" id="277011at2759"/>
<dbReference type="PAN-GO" id="O95476">
    <property type="GO annotations" value="1 GO annotation based on evolutionary models"/>
</dbReference>
<dbReference type="PhylomeDB" id="O95476"/>
<dbReference type="TreeFam" id="TF313962"/>
<dbReference type="PathwayCommons" id="O95476"/>
<dbReference type="Reactome" id="R-HSA-4419969">
    <property type="pathway name" value="Depolymerization of the Nuclear Lamina"/>
</dbReference>
<dbReference type="SABIO-RK" id="O95476"/>
<dbReference type="SignaLink" id="O95476"/>
<dbReference type="SIGNOR" id="O95476"/>
<dbReference type="BioGRID-ORCS" id="23399">
    <property type="hits" value="283 hits in 1168 CRISPR screens"/>
</dbReference>
<dbReference type="ChiTaRS" id="CTDNEP1">
    <property type="organism name" value="human"/>
</dbReference>
<dbReference type="GenomeRNAi" id="23399"/>
<dbReference type="Pharos" id="O95476">
    <property type="development level" value="Tbio"/>
</dbReference>
<dbReference type="PRO" id="PR:O95476"/>
<dbReference type="Proteomes" id="UP000005640">
    <property type="component" value="Chromosome 17"/>
</dbReference>
<dbReference type="RNAct" id="O95476">
    <property type="molecule type" value="protein"/>
</dbReference>
<dbReference type="Bgee" id="ENSG00000175826">
    <property type="expression patterns" value="Expressed in hindlimb stylopod muscle and 95 other cell types or tissues"/>
</dbReference>
<dbReference type="ExpressionAtlas" id="O95476">
    <property type="expression patterns" value="baseline and differential"/>
</dbReference>
<dbReference type="GO" id="GO:0005737">
    <property type="term" value="C:cytoplasm"/>
    <property type="evidence" value="ECO:0000314"/>
    <property type="project" value="UniProtKB"/>
</dbReference>
<dbReference type="GO" id="GO:0005789">
    <property type="term" value="C:endoplasmic reticulum membrane"/>
    <property type="evidence" value="ECO:0000314"/>
    <property type="project" value="UniProtKB"/>
</dbReference>
<dbReference type="GO" id="GO:0005811">
    <property type="term" value="C:lipid droplet"/>
    <property type="evidence" value="ECO:0000314"/>
    <property type="project" value="HPA"/>
</dbReference>
<dbReference type="GO" id="GO:0071595">
    <property type="term" value="C:Nem1-Spo7 phosphatase complex"/>
    <property type="evidence" value="ECO:0000314"/>
    <property type="project" value="UniProtKB"/>
</dbReference>
<dbReference type="GO" id="GO:0005635">
    <property type="term" value="C:nuclear envelope"/>
    <property type="evidence" value="ECO:0000314"/>
    <property type="project" value="UniProtKB"/>
</dbReference>
<dbReference type="GO" id="GO:0031965">
    <property type="term" value="C:nuclear membrane"/>
    <property type="evidence" value="ECO:0000314"/>
    <property type="project" value="UniProtKB"/>
</dbReference>
<dbReference type="GO" id="GO:0004721">
    <property type="term" value="F:phosphoprotein phosphatase activity"/>
    <property type="evidence" value="ECO:0000314"/>
    <property type="project" value="UniProtKB"/>
</dbReference>
<dbReference type="GO" id="GO:0004722">
    <property type="term" value="F:protein serine/threonine phosphatase activity"/>
    <property type="evidence" value="ECO:0000315"/>
    <property type="project" value="UniProtKB"/>
</dbReference>
<dbReference type="GO" id="GO:0060070">
    <property type="term" value="P:canonical Wnt signaling pathway"/>
    <property type="evidence" value="ECO:0007669"/>
    <property type="project" value="Ensembl"/>
</dbReference>
<dbReference type="GO" id="GO:0007276">
    <property type="term" value="P:gamete generation"/>
    <property type="evidence" value="ECO:0007669"/>
    <property type="project" value="Ensembl"/>
</dbReference>
<dbReference type="GO" id="GO:0007498">
    <property type="term" value="P:mesoderm development"/>
    <property type="evidence" value="ECO:0007669"/>
    <property type="project" value="Ensembl"/>
</dbReference>
<dbReference type="GO" id="GO:0007077">
    <property type="term" value="P:mitotic nuclear membrane disassembly"/>
    <property type="evidence" value="ECO:0000304"/>
    <property type="project" value="Reactome"/>
</dbReference>
<dbReference type="GO" id="GO:0006998">
    <property type="term" value="P:nuclear envelope organization"/>
    <property type="evidence" value="ECO:0000314"/>
    <property type="project" value="UniProtKB"/>
</dbReference>
<dbReference type="GO" id="GO:0090263">
    <property type="term" value="P:positive regulation of canonical Wnt signaling pathway"/>
    <property type="evidence" value="ECO:0007669"/>
    <property type="project" value="Ensembl"/>
</dbReference>
<dbReference type="GO" id="GO:0010867">
    <property type="term" value="P:positive regulation of triglyceride biosynthetic process"/>
    <property type="evidence" value="ECO:0000314"/>
    <property type="project" value="UniProtKB"/>
</dbReference>
<dbReference type="GO" id="GO:0006470">
    <property type="term" value="P:protein dephosphorylation"/>
    <property type="evidence" value="ECO:0000314"/>
    <property type="project" value="UniProtKB"/>
</dbReference>
<dbReference type="GO" id="GO:0034504">
    <property type="term" value="P:protein localization to nucleus"/>
    <property type="evidence" value="ECO:0000314"/>
    <property type="project" value="UniProtKB"/>
</dbReference>
<dbReference type="CDD" id="cd07521">
    <property type="entry name" value="HAD_FCP1-like"/>
    <property type="match status" value="1"/>
</dbReference>
<dbReference type="FunFam" id="3.40.50.1000:FF:000044">
    <property type="entry name" value="CTD nuclear envelope phosphatase 1"/>
    <property type="match status" value="1"/>
</dbReference>
<dbReference type="Gene3D" id="3.40.50.1000">
    <property type="entry name" value="HAD superfamily/HAD-like"/>
    <property type="match status" value="1"/>
</dbReference>
<dbReference type="InterPro" id="IPR011948">
    <property type="entry name" value="Dullard_phosphatase"/>
</dbReference>
<dbReference type="InterPro" id="IPR004274">
    <property type="entry name" value="FCP1_dom"/>
</dbReference>
<dbReference type="InterPro" id="IPR036412">
    <property type="entry name" value="HAD-like_sf"/>
</dbReference>
<dbReference type="InterPro" id="IPR023214">
    <property type="entry name" value="HAD_sf"/>
</dbReference>
<dbReference type="InterPro" id="IPR050365">
    <property type="entry name" value="TIM50"/>
</dbReference>
<dbReference type="NCBIfam" id="TIGR02251">
    <property type="entry name" value="HIF-SF_euk"/>
    <property type="match status" value="1"/>
</dbReference>
<dbReference type="PANTHER" id="PTHR12210">
    <property type="entry name" value="DULLARD PROTEIN PHOSPHATASE"/>
    <property type="match status" value="1"/>
</dbReference>
<dbReference type="Pfam" id="PF03031">
    <property type="entry name" value="NIF"/>
    <property type="match status" value="1"/>
</dbReference>
<dbReference type="SMART" id="SM00577">
    <property type="entry name" value="CPDc"/>
    <property type="match status" value="1"/>
</dbReference>
<dbReference type="SUPFAM" id="SSF56784">
    <property type="entry name" value="HAD-like"/>
    <property type="match status" value="1"/>
</dbReference>
<dbReference type="PROSITE" id="PS50969">
    <property type="entry name" value="FCP1"/>
    <property type="match status" value="1"/>
</dbReference>
<proteinExistence type="evidence at protein level"/>
<accession>O95476</accession>
<accession>D3DTN7</accession>
<accession>Q96GQ9</accession>